<sequence>KDGYLVGSDGCKYSCLTRPG</sequence>
<dbReference type="GO" id="GO:0005576">
    <property type="term" value="C:extracellular region"/>
    <property type="evidence" value="ECO:0007669"/>
    <property type="project" value="UniProtKB-SubCell"/>
</dbReference>
<dbReference type="GO" id="GO:0008200">
    <property type="term" value="F:ion channel inhibitor activity"/>
    <property type="evidence" value="ECO:0007669"/>
    <property type="project" value="InterPro"/>
</dbReference>
<dbReference type="GO" id="GO:0017080">
    <property type="term" value="F:sodium channel regulator activity"/>
    <property type="evidence" value="ECO:0007669"/>
    <property type="project" value="UniProtKB-KW"/>
</dbReference>
<dbReference type="GO" id="GO:0090729">
    <property type="term" value="F:toxin activity"/>
    <property type="evidence" value="ECO:0007669"/>
    <property type="project" value="UniProtKB-KW"/>
</dbReference>
<dbReference type="InterPro" id="IPR044062">
    <property type="entry name" value="LCN-type_CS_alpha_beta_dom"/>
</dbReference>
<dbReference type="InterPro" id="IPR036574">
    <property type="entry name" value="Scorpion_toxin-like_sf"/>
</dbReference>
<dbReference type="SUPFAM" id="SSF57095">
    <property type="entry name" value="Scorpion toxin-like"/>
    <property type="match status" value="1"/>
</dbReference>
<dbReference type="PROSITE" id="PS51863">
    <property type="entry name" value="LCN_CSAB"/>
    <property type="match status" value="1"/>
</dbReference>
<reference key="1">
    <citation type="journal article" date="2006" name="Biochim. Biophys. Acta">
        <title>Proteomic analysis of the venom and characterization of toxins specific for Na+ - and K+ -channels from the Colombian scorpion Tityus pachyurus.</title>
        <authorList>
            <person name="Barona J."/>
            <person name="Batista C.V.F."/>
            <person name="Zamudio F.Z."/>
            <person name="Gomez-Lagunas F."/>
            <person name="Wanke E."/>
            <person name="Otero R."/>
            <person name="Possani L.D."/>
        </authorList>
    </citation>
    <scope>PROTEIN SEQUENCE</scope>
    <scope>SUBCELLULAR LOCATION</scope>
    <scope>TISSUE SPECIFICITY</scope>
    <scope>MASS SPECTROMETRY</scope>
    <source>
        <tissue>Venom</tissue>
    </source>
</reference>
<keyword id="KW-0903">Direct protein sequencing</keyword>
<keyword id="KW-1015">Disulfide bond</keyword>
<keyword id="KW-0872">Ion channel impairing toxin</keyword>
<keyword id="KW-0528">Neurotoxin</keyword>
<keyword id="KW-0964">Secreted</keyword>
<keyword id="KW-0800">Toxin</keyword>
<keyword id="KW-0738">Voltage-gated sodium channel impairing toxin</keyword>
<organism>
    <name type="scientific">Tityus pachyurus</name>
    <name type="common">Colombian scorpion</name>
    <dbReference type="NCBI Taxonomy" id="288781"/>
    <lineage>
        <taxon>Eukaryota</taxon>
        <taxon>Metazoa</taxon>
        <taxon>Ecdysozoa</taxon>
        <taxon>Arthropoda</taxon>
        <taxon>Chelicerata</taxon>
        <taxon>Arachnida</taxon>
        <taxon>Scorpiones</taxon>
        <taxon>Buthida</taxon>
        <taxon>Buthoidea</taxon>
        <taxon>Buthidae</taxon>
        <taxon>Tityus</taxon>
    </lineage>
</organism>
<protein>
    <recommendedName>
        <fullName>Putative beta-neurotoxin</fullName>
    </recommendedName>
</protein>
<accession>P0DL24</accession>
<feature type="chain" id="PRO_0000422256" description="Putative beta-neurotoxin">
    <location>
        <begin position="1"/>
        <end position="20" status="greater than"/>
    </location>
</feature>
<feature type="domain" description="LCN-type CS-alpha/beta" evidence="2">
    <location>
        <begin position="1"/>
        <end position="20" status="greater than"/>
    </location>
</feature>
<feature type="disulfide bond" evidence="1">
    <location>
        <begin position="11"/>
        <end status="unknown"/>
    </location>
</feature>
<feature type="disulfide bond" evidence="1">
    <location>
        <begin position="15"/>
        <end status="unknown"/>
    </location>
</feature>
<feature type="non-terminal residue">
    <location>
        <position position="20"/>
    </location>
</feature>
<name>SCXT_TITPA</name>
<proteinExistence type="evidence at protein level"/>
<comment type="function">
    <text evidence="1">Beta toxins bind voltage-independently at site-4 of sodium channels (Nav) and shift the voltage of activation toward more negative potentials thereby affecting sodium channel activation and promoting spontaneous and repetitive firing.</text>
</comment>
<comment type="subcellular location">
    <subcellularLocation>
        <location evidence="3">Secreted</location>
    </subcellularLocation>
</comment>
<comment type="tissue specificity">
    <text evidence="3">Expressed by the venom gland.</text>
</comment>
<comment type="domain">
    <text evidence="4">Has the structural arrangement of an alpha-helix connected to antiparallel beta-sheets by disulfide bonds (CS-alpha/beta).</text>
</comment>
<comment type="mass spectrometry"/>
<comment type="similarity">
    <text evidence="4">Belongs to the long (4 C-C) scorpion toxin superfamily. Sodium channel inhibitor family. Beta subfamily.</text>
</comment>
<evidence type="ECO:0000250" key="1"/>
<evidence type="ECO:0000255" key="2">
    <source>
        <dbReference type="PROSITE-ProRule" id="PRU01210"/>
    </source>
</evidence>
<evidence type="ECO:0000269" key="3">
    <source>
    </source>
</evidence>
<evidence type="ECO:0000305" key="4"/>